<proteinExistence type="inferred from homology"/>
<dbReference type="EC" id="3.1.26.4" evidence="1"/>
<dbReference type="EMBL" id="CP001019">
    <property type="protein sequence ID" value="ACJ18072.1"/>
    <property type="molecule type" value="Genomic_DNA"/>
</dbReference>
<dbReference type="RefSeq" id="WP_012569872.1">
    <property type="nucleotide sequence ID" value="NC_011527.1"/>
</dbReference>
<dbReference type="SMR" id="B6IZE4"/>
<dbReference type="KEGG" id="cbg:CbuG_0669"/>
<dbReference type="HOGENOM" id="CLU_036532_3_2_6"/>
<dbReference type="GO" id="GO:0005737">
    <property type="term" value="C:cytoplasm"/>
    <property type="evidence" value="ECO:0007669"/>
    <property type="project" value="UniProtKB-SubCell"/>
</dbReference>
<dbReference type="GO" id="GO:0032299">
    <property type="term" value="C:ribonuclease H2 complex"/>
    <property type="evidence" value="ECO:0007669"/>
    <property type="project" value="TreeGrafter"/>
</dbReference>
<dbReference type="GO" id="GO:0030145">
    <property type="term" value="F:manganese ion binding"/>
    <property type="evidence" value="ECO:0007669"/>
    <property type="project" value="UniProtKB-UniRule"/>
</dbReference>
<dbReference type="GO" id="GO:0003723">
    <property type="term" value="F:RNA binding"/>
    <property type="evidence" value="ECO:0007669"/>
    <property type="project" value="InterPro"/>
</dbReference>
<dbReference type="GO" id="GO:0004523">
    <property type="term" value="F:RNA-DNA hybrid ribonuclease activity"/>
    <property type="evidence" value="ECO:0007669"/>
    <property type="project" value="UniProtKB-UniRule"/>
</dbReference>
<dbReference type="GO" id="GO:0043137">
    <property type="term" value="P:DNA replication, removal of RNA primer"/>
    <property type="evidence" value="ECO:0007669"/>
    <property type="project" value="TreeGrafter"/>
</dbReference>
<dbReference type="GO" id="GO:0006298">
    <property type="term" value="P:mismatch repair"/>
    <property type="evidence" value="ECO:0007669"/>
    <property type="project" value="TreeGrafter"/>
</dbReference>
<dbReference type="CDD" id="cd07182">
    <property type="entry name" value="RNase_HII_bacteria_HII_like"/>
    <property type="match status" value="1"/>
</dbReference>
<dbReference type="FunFam" id="3.30.420.10:FF:000006">
    <property type="entry name" value="Ribonuclease HII"/>
    <property type="match status" value="1"/>
</dbReference>
<dbReference type="Gene3D" id="3.30.420.10">
    <property type="entry name" value="Ribonuclease H-like superfamily/Ribonuclease H"/>
    <property type="match status" value="1"/>
</dbReference>
<dbReference type="HAMAP" id="MF_00052_B">
    <property type="entry name" value="RNase_HII_B"/>
    <property type="match status" value="1"/>
</dbReference>
<dbReference type="InterPro" id="IPR022898">
    <property type="entry name" value="RNase_HII"/>
</dbReference>
<dbReference type="InterPro" id="IPR001352">
    <property type="entry name" value="RNase_HII/HIII"/>
</dbReference>
<dbReference type="InterPro" id="IPR024567">
    <property type="entry name" value="RNase_HII/HIII_dom"/>
</dbReference>
<dbReference type="InterPro" id="IPR012337">
    <property type="entry name" value="RNaseH-like_sf"/>
</dbReference>
<dbReference type="InterPro" id="IPR036397">
    <property type="entry name" value="RNaseH_sf"/>
</dbReference>
<dbReference type="NCBIfam" id="NF000594">
    <property type="entry name" value="PRK00015.1-1"/>
    <property type="match status" value="1"/>
</dbReference>
<dbReference type="NCBIfam" id="NF000595">
    <property type="entry name" value="PRK00015.1-3"/>
    <property type="match status" value="1"/>
</dbReference>
<dbReference type="NCBIfam" id="NF000596">
    <property type="entry name" value="PRK00015.1-4"/>
    <property type="match status" value="1"/>
</dbReference>
<dbReference type="PANTHER" id="PTHR10954">
    <property type="entry name" value="RIBONUCLEASE H2 SUBUNIT A"/>
    <property type="match status" value="1"/>
</dbReference>
<dbReference type="PANTHER" id="PTHR10954:SF18">
    <property type="entry name" value="RIBONUCLEASE HII"/>
    <property type="match status" value="1"/>
</dbReference>
<dbReference type="Pfam" id="PF01351">
    <property type="entry name" value="RNase_HII"/>
    <property type="match status" value="1"/>
</dbReference>
<dbReference type="SUPFAM" id="SSF53098">
    <property type="entry name" value="Ribonuclease H-like"/>
    <property type="match status" value="1"/>
</dbReference>
<dbReference type="PROSITE" id="PS51975">
    <property type="entry name" value="RNASE_H_2"/>
    <property type="match status" value="1"/>
</dbReference>
<sequence length="202" mass="22331">MDTPFAKTPSNLLIAGVDEAGRGPLAGPVITAAVILNPEIIIEGLADSKKLSLKKREELYEKIITNCKAFAIARADVEEIDRLNIFRATLLAMQRAINQLSIQPDKVLIDGHCCPDLPYETQAIVQGDQNVPAISAASILAKVTRDREMLKYDAQYPDYGFAIHKGYGTKAHLAAIHRFGITPVHRKSFEPVRQLKLFIPEE</sequence>
<evidence type="ECO:0000255" key="1">
    <source>
        <dbReference type="HAMAP-Rule" id="MF_00052"/>
    </source>
</evidence>
<evidence type="ECO:0000255" key="2">
    <source>
        <dbReference type="PROSITE-ProRule" id="PRU01319"/>
    </source>
</evidence>
<feature type="chain" id="PRO_1000091618" description="Ribonuclease HII">
    <location>
        <begin position="1"/>
        <end position="202"/>
    </location>
</feature>
<feature type="domain" description="RNase H type-2" evidence="2">
    <location>
        <begin position="12"/>
        <end position="201"/>
    </location>
</feature>
<feature type="binding site" evidence="1">
    <location>
        <position position="18"/>
    </location>
    <ligand>
        <name>a divalent metal cation</name>
        <dbReference type="ChEBI" id="CHEBI:60240"/>
    </ligand>
</feature>
<feature type="binding site" evidence="1">
    <location>
        <position position="19"/>
    </location>
    <ligand>
        <name>a divalent metal cation</name>
        <dbReference type="ChEBI" id="CHEBI:60240"/>
    </ligand>
</feature>
<feature type="binding site" evidence="1">
    <location>
        <position position="110"/>
    </location>
    <ligand>
        <name>a divalent metal cation</name>
        <dbReference type="ChEBI" id="CHEBI:60240"/>
    </ligand>
</feature>
<reference key="1">
    <citation type="journal article" date="2009" name="Infect. Immun.">
        <title>Comparative genomics reveal extensive transposon-mediated genomic plasticity and diversity among potential effector proteins within the genus Coxiella.</title>
        <authorList>
            <person name="Beare P.A."/>
            <person name="Unsworth N."/>
            <person name="Andoh M."/>
            <person name="Voth D.E."/>
            <person name="Omsland A."/>
            <person name="Gilk S.D."/>
            <person name="Williams K.P."/>
            <person name="Sobral B.W."/>
            <person name="Kupko J.J. III"/>
            <person name="Porcella S.F."/>
            <person name="Samuel J.E."/>
            <person name="Heinzen R.A."/>
        </authorList>
    </citation>
    <scope>NUCLEOTIDE SEQUENCE [LARGE SCALE GENOMIC DNA]</scope>
    <source>
        <strain>CbuG_Q212</strain>
    </source>
</reference>
<name>RNH2_COXB2</name>
<comment type="function">
    <text evidence="1">Endonuclease that specifically degrades the RNA of RNA-DNA hybrids.</text>
</comment>
<comment type="catalytic activity">
    <reaction evidence="1">
        <text>Endonucleolytic cleavage to 5'-phosphomonoester.</text>
        <dbReference type="EC" id="3.1.26.4"/>
    </reaction>
</comment>
<comment type="cofactor">
    <cofactor evidence="1">
        <name>Mn(2+)</name>
        <dbReference type="ChEBI" id="CHEBI:29035"/>
    </cofactor>
    <cofactor evidence="1">
        <name>Mg(2+)</name>
        <dbReference type="ChEBI" id="CHEBI:18420"/>
    </cofactor>
    <text evidence="1">Manganese or magnesium. Binds 1 divalent metal ion per monomer in the absence of substrate. May bind a second metal ion after substrate binding.</text>
</comment>
<comment type="subcellular location">
    <subcellularLocation>
        <location evidence="1">Cytoplasm</location>
    </subcellularLocation>
</comment>
<comment type="similarity">
    <text evidence="1">Belongs to the RNase HII family.</text>
</comment>
<organism>
    <name type="scientific">Coxiella burnetii (strain CbuG_Q212)</name>
    <name type="common">Coxiella burnetii (strain Q212)</name>
    <dbReference type="NCBI Taxonomy" id="434923"/>
    <lineage>
        <taxon>Bacteria</taxon>
        <taxon>Pseudomonadati</taxon>
        <taxon>Pseudomonadota</taxon>
        <taxon>Gammaproteobacteria</taxon>
        <taxon>Legionellales</taxon>
        <taxon>Coxiellaceae</taxon>
        <taxon>Coxiella</taxon>
    </lineage>
</organism>
<gene>
    <name evidence="1" type="primary">rnhB</name>
    <name type="ordered locus">CbuG_0669</name>
</gene>
<keyword id="KW-0963">Cytoplasm</keyword>
<keyword id="KW-0255">Endonuclease</keyword>
<keyword id="KW-0378">Hydrolase</keyword>
<keyword id="KW-0464">Manganese</keyword>
<keyword id="KW-0479">Metal-binding</keyword>
<keyword id="KW-0540">Nuclease</keyword>
<accession>B6IZE4</accession>
<protein>
    <recommendedName>
        <fullName evidence="1">Ribonuclease HII</fullName>
        <shortName evidence="1">RNase HII</shortName>
        <ecNumber evidence="1">3.1.26.4</ecNumber>
    </recommendedName>
</protein>